<comment type="function">
    <text>Growth suppressor that facilitates the entry of the cell into cell cycle arrest. Functionally similar to the retinoblastoma protein it binds to and represses the activity of cell-cycle-promoting proteins such as SV40 large T antigen, adenovirus E1A, and the transcription factor E2F. Necdin also interacts with p53 and works in an additive manner to inhibit cell growth. Also functions as a transcription factor and directly binds to specific guanosine-rich DNA sequences.</text>
</comment>
<comment type="subunit">
    <text evidence="3 6">Binds to the transactivation domains of E2F1 and p53. Binds also SV40 large T antigen and adenovirus E1A. Interacts with nucleobindin 1 and 2.</text>
</comment>
<comment type="interaction">
    <interactant intactId="EBI-1801080">
        <id>P25233</id>
    </interactant>
    <interactant intactId="EBI-1025536">
        <id>Q61501</id>
        <label>E2f1</label>
    </interactant>
    <organismsDiffer>false</organismsDiffer>
    <experiments>6</experiments>
</comment>
<comment type="interaction">
    <interactant intactId="EBI-1801080">
        <id>P25233</id>
    </interactant>
    <interactant intactId="EBI-1801274">
        <id>Q9QYH6</id>
        <label>Maged1</label>
    </interactant>
    <organismsDiffer>false</organismsDiffer>
    <experiments>7</experiments>
</comment>
<comment type="interaction">
    <interactant intactId="EBI-1801080">
        <id>P25233</id>
    </interactant>
    <interactant intactId="EBI-903969">
        <id>P13297</id>
        <label>Msx1</label>
    </interactant>
    <organismsDiffer>false</organismsDiffer>
    <experiments>2</experiments>
</comment>
<comment type="interaction">
    <interactant intactId="EBI-1801080">
        <id>P25233</id>
    </interactant>
    <interactant intactId="EBI-1801354">
        <id>Q03358</id>
        <label>Msx2</label>
    </interactant>
    <organismsDiffer>false</organismsDiffer>
    <experiments>3</experiments>
</comment>
<comment type="interaction">
    <interactant intactId="EBI-1801080">
        <id>P25233</id>
    </interactant>
    <interactant intactId="EBI-1049975">
        <id>Q9Y6B2</id>
        <label>EID1</label>
    </interactant>
    <organismsDiffer>true</organismsDiffer>
    <experiments>5</experiments>
</comment>
<comment type="interaction">
    <interactant intactId="EBI-1801080">
        <id>P25233</id>
    </interactant>
    <interactant intactId="EBI-1387782">
        <id>P08138</id>
        <label>NGFR</label>
    </interactant>
    <organismsDiffer>true</organismsDiffer>
    <experiments>3</experiments>
</comment>
<comment type="subcellular location">
    <subcellularLocation>
        <location evidence="4">Cytoplasm</location>
    </subcellularLocation>
    <subcellularLocation>
        <location evidence="4">Nucleus</location>
        <location evidence="4">Nucleoplasm</location>
    </subcellularLocation>
    <subcellularLocation>
        <location evidence="4">Nucleus matrix</location>
    </subcellularLocation>
    <text>Mainly cytoplasmic. Translocates to the nucleus where it is found associated with the nuclear matrix.</text>
</comment>
<comment type="tissue specificity">
    <text>Brain specific. Not detected in other tissues. Expressed in postmitotic neurons. In adult brain the highest expression is in hypothalamus. Highly expressed in thalamus and midbrain. Relatively low levels are in cerebral cortex, hippocampus, striatum, olfactory bulb, cerebellum, pons and spinal cord. Also detected in neurally differentiated embryonal carcinoma cells.</text>
</comment>
<comment type="developmental stage">
    <text>Expression levels were high during embryonic and neonatal periods (14 dpc to P7) and decreased thereafter.</text>
</comment>
<proteinExistence type="evidence at protein level"/>
<protein>
    <recommendedName>
        <fullName>Necdin</fullName>
    </recommendedName>
</protein>
<feature type="chain" id="PRO_0000156741" description="Necdin">
    <location>
        <begin position="1"/>
        <end position="325"/>
    </location>
</feature>
<feature type="domain" description="MAGE" evidence="1">
    <location>
        <begin position="102"/>
        <end position="301"/>
    </location>
</feature>
<feature type="region of interest" description="Disordered" evidence="2">
    <location>
        <begin position="1"/>
        <end position="69"/>
    </location>
</feature>
<feature type="region of interest" description="Disordered" evidence="2">
    <location>
        <begin position="77"/>
        <end position="96"/>
    </location>
</feature>
<feature type="sequence variant" evidence="5">
    <original>V</original>
    <variation>A</variation>
    <location>
        <position position="17"/>
    </location>
</feature>
<reference key="1">
    <citation type="journal article" date="1991" name="Biochem. Biophys. Res. Commun.">
        <title>A novel brain-specific mRNA encoding nuclear protein (necdin) expressed in neurally differentiated embryonal carcinoma cells.</title>
        <authorList>
            <person name="Maruyama K."/>
            <person name="Usami M."/>
            <person name="Aizawa T."/>
            <person name="Yoshikawa K."/>
        </authorList>
    </citation>
    <scope>NUCLEOTIDE SEQUENCE [MRNA]</scope>
    <source>
        <tissue>Embryonic carcinoma</tissue>
    </source>
</reference>
<reference key="2">
    <citation type="journal article" date="1996" name="J. Biol. Chem.">
        <title>Structure and expression of the mouse necdin gene. Identification of a postmitotic neuron-restrictive core promoter.</title>
        <authorList>
            <person name="Uetsuki T."/>
            <person name="Takagi K."/>
            <person name="Sugiura H."/>
            <person name="Yoshikawa K."/>
        </authorList>
    </citation>
    <scope>NUCLEOTIDE SEQUENCE [GENOMIC DNA]</scope>
    <scope>VARIANT ALA-17</scope>
    <source>
        <strain>129/Sv</strain>
    </source>
</reference>
<reference key="3">
    <citation type="journal article" date="2005" name="Science">
        <title>The transcriptional landscape of the mammalian genome.</title>
        <authorList>
            <person name="Carninci P."/>
            <person name="Kasukawa T."/>
            <person name="Katayama S."/>
            <person name="Gough J."/>
            <person name="Frith M.C."/>
            <person name="Maeda N."/>
            <person name="Oyama R."/>
            <person name="Ravasi T."/>
            <person name="Lenhard B."/>
            <person name="Wells C."/>
            <person name="Kodzius R."/>
            <person name="Shimokawa K."/>
            <person name="Bajic V.B."/>
            <person name="Brenner S.E."/>
            <person name="Batalov S."/>
            <person name="Forrest A.R."/>
            <person name="Zavolan M."/>
            <person name="Davis M.J."/>
            <person name="Wilming L.G."/>
            <person name="Aidinis V."/>
            <person name="Allen J.E."/>
            <person name="Ambesi-Impiombato A."/>
            <person name="Apweiler R."/>
            <person name="Aturaliya R.N."/>
            <person name="Bailey T.L."/>
            <person name="Bansal M."/>
            <person name="Baxter L."/>
            <person name="Beisel K.W."/>
            <person name="Bersano T."/>
            <person name="Bono H."/>
            <person name="Chalk A.M."/>
            <person name="Chiu K.P."/>
            <person name="Choudhary V."/>
            <person name="Christoffels A."/>
            <person name="Clutterbuck D.R."/>
            <person name="Crowe M.L."/>
            <person name="Dalla E."/>
            <person name="Dalrymple B.P."/>
            <person name="de Bono B."/>
            <person name="Della Gatta G."/>
            <person name="di Bernardo D."/>
            <person name="Down T."/>
            <person name="Engstrom P."/>
            <person name="Fagiolini M."/>
            <person name="Faulkner G."/>
            <person name="Fletcher C.F."/>
            <person name="Fukushima T."/>
            <person name="Furuno M."/>
            <person name="Futaki S."/>
            <person name="Gariboldi M."/>
            <person name="Georgii-Hemming P."/>
            <person name="Gingeras T.R."/>
            <person name="Gojobori T."/>
            <person name="Green R.E."/>
            <person name="Gustincich S."/>
            <person name="Harbers M."/>
            <person name="Hayashi Y."/>
            <person name="Hensch T.K."/>
            <person name="Hirokawa N."/>
            <person name="Hill D."/>
            <person name="Huminiecki L."/>
            <person name="Iacono M."/>
            <person name="Ikeo K."/>
            <person name="Iwama A."/>
            <person name="Ishikawa T."/>
            <person name="Jakt M."/>
            <person name="Kanapin A."/>
            <person name="Katoh M."/>
            <person name="Kawasawa Y."/>
            <person name="Kelso J."/>
            <person name="Kitamura H."/>
            <person name="Kitano H."/>
            <person name="Kollias G."/>
            <person name="Krishnan S.P."/>
            <person name="Kruger A."/>
            <person name="Kummerfeld S.K."/>
            <person name="Kurochkin I.V."/>
            <person name="Lareau L.F."/>
            <person name="Lazarevic D."/>
            <person name="Lipovich L."/>
            <person name="Liu J."/>
            <person name="Liuni S."/>
            <person name="McWilliam S."/>
            <person name="Madan Babu M."/>
            <person name="Madera M."/>
            <person name="Marchionni L."/>
            <person name="Matsuda H."/>
            <person name="Matsuzawa S."/>
            <person name="Miki H."/>
            <person name="Mignone F."/>
            <person name="Miyake S."/>
            <person name="Morris K."/>
            <person name="Mottagui-Tabar S."/>
            <person name="Mulder N."/>
            <person name="Nakano N."/>
            <person name="Nakauchi H."/>
            <person name="Ng P."/>
            <person name="Nilsson R."/>
            <person name="Nishiguchi S."/>
            <person name="Nishikawa S."/>
            <person name="Nori F."/>
            <person name="Ohara O."/>
            <person name="Okazaki Y."/>
            <person name="Orlando V."/>
            <person name="Pang K.C."/>
            <person name="Pavan W.J."/>
            <person name="Pavesi G."/>
            <person name="Pesole G."/>
            <person name="Petrovsky N."/>
            <person name="Piazza S."/>
            <person name="Reed J."/>
            <person name="Reid J.F."/>
            <person name="Ring B.Z."/>
            <person name="Ringwald M."/>
            <person name="Rost B."/>
            <person name="Ruan Y."/>
            <person name="Salzberg S.L."/>
            <person name="Sandelin A."/>
            <person name="Schneider C."/>
            <person name="Schoenbach C."/>
            <person name="Sekiguchi K."/>
            <person name="Semple C.A."/>
            <person name="Seno S."/>
            <person name="Sessa L."/>
            <person name="Sheng Y."/>
            <person name="Shibata Y."/>
            <person name="Shimada H."/>
            <person name="Shimada K."/>
            <person name="Silva D."/>
            <person name="Sinclair B."/>
            <person name="Sperling S."/>
            <person name="Stupka E."/>
            <person name="Sugiura K."/>
            <person name="Sultana R."/>
            <person name="Takenaka Y."/>
            <person name="Taki K."/>
            <person name="Tammoja K."/>
            <person name="Tan S.L."/>
            <person name="Tang S."/>
            <person name="Taylor M.S."/>
            <person name="Tegner J."/>
            <person name="Teichmann S.A."/>
            <person name="Ueda H.R."/>
            <person name="van Nimwegen E."/>
            <person name="Verardo R."/>
            <person name="Wei C.L."/>
            <person name="Yagi K."/>
            <person name="Yamanishi H."/>
            <person name="Zabarovsky E."/>
            <person name="Zhu S."/>
            <person name="Zimmer A."/>
            <person name="Hide W."/>
            <person name="Bult C."/>
            <person name="Grimmond S.M."/>
            <person name="Teasdale R.D."/>
            <person name="Liu E.T."/>
            <person name="Brusic V."/>
            <person name="Quackenbush J."/>
            <person name="Wahlestedt C."/>
            <person name="Mattick J.S."/>
            <person name="Hume D.A."/>
            <person name="Kai C."/>
            <person name="Sasaki D."/>
            <person name="Tomaru Y."/>
            <person name="Fukuda S."/>
            <person name="Kanamori-Katayama M."/>
            <person name="Suzuki M."/>
            <person name="Aoki J."/>
            <person name="Arakawa T."/>
            <person name="Iida J."/>
            <person name="Imamura K."/>
            <person name="Itoh M."/>
            <person name="Kato T."/>
            <person name="Kawaji H."/>
            <person name="Kawagashira N."/>
            <person name="Kawashima T."/>
            <person name="Kojima M."/>
            <person name="Kondo S."/>
            <person name="Konno H."/>
            <person name="Nakano K."/>
            <person name="Ninomiya N."/>
            <person name="Nishio T."/>
            <person name="Okada M."/>
            <person name="Plessy C."/>
            <person name="Shibata K."/>
            <person name="Shiraki T."/>
            <person name="Suzuki S."/>
            <person name="Tagami M."/>
            <person name="Waki K."/>
            <person name="Watahiki A."/>
            <person name="Okamura-Oho Y."/>
            <person name="Suzuki H."/>
            <person name="Kawai J."/>
            <person name="Hayashizaki Y."/>
        </authorList>
    </citation>
    <scope>NUCLEOTIDE SEQUENCE [LARGE SCALE MRNA]</scope>
    <source>
        <strain>C57BL/6J</strain>
        <tissue>Cerebellum</tissue>
        <tissue>Muellerian duct</tissue>
        <tissue>Sympathetic ganglion</tissue>
    </source>
</reference>
<reference key="4">
    <citation type="journal article" date="2004" name="Genome Res.">
        <title>The status, quality, and expansion of the NIH full-length cDNA project: the Mammalian Gene Collection (MGC).</title>
        <authorList>
            <consortium name="The MGC Project Team"/>
        </authorList>
    </citation>
    <scope>NUCLEOTIDE SEQUENCE [LARGE SCALE MRNA]</scope>
    <source>
        <strain>FVB/N</strain>
        <tissue>Brain</tissue>
    </source>
</reference>
<reference key="5">
    <citation type="journal article" date="1998" name="J. Biol. Chem.">
        <title>Necdin, a postmitotic neuron-specific growth suppressor, interacts with viral transforming proteins and cellular transcription factor E2F1.</title>
        <authorList>
            <person name="Taniura H."/>
            <person name="Taniguchi N."/>
            <person name="Hara M."/>
            <person name="Yoshikawa K."/>
        </authorList>
    </citation>
    <scope>INTERACTION WITH VIRAL TRANSFORMING PROTEINS AND EF21</scope>
</reference>
<reference key="6">
    <citation type="journal article" date="1999" name="J. Biol. Chem.">
        <title>Physical and functional interactions of neuronal growth suppressor necdin with p53.</title>
        <authorList>
            <person name="Taniura H."/>
            <person name="Matsumoto K."/>
            <person name="Yoshikawa K."/>
        </authorList>
    </citation>
    <scope>INTERACTION WITH TP53</scope>
</reference>
<reference key="7">
    <citation type="journal article" date="2000" name="Dev. Neurosci.">
        <title>Cellular and subcellular localization of necdin in fetal and adult mouse brain.</title>
        <authorList>
            <person name="Niinobe M."/>
            <person name="Koyama K."/>
            <person name="Yoshikawa K."/>
        </authorList>
    </citation>
    <scope>SUBCELLULAR LOCATION</scope>
</reference>
<sequence>MSEQSKDLSDPNFAAEVPDCEMQDSDAVPVGIPPPASLAANLAGPPCAPEGPMAAQQASPPPEERIEDVDPKILQQAAEEGRAHQPQSPARPIPAPPAPAQLVQKAHELMWYVLVKDQKRMVLWFPDMVKEVMGSYKKWCRSILRRTSVILARVFGLHLRLTNLHTMEFALVKALSPEELDRVALNNRMPMTGLLLMILSLIYVKGRGAREGAVWNVLRILGLRPWKKHSTFGDVRKIITEEFVQQNYLKYQRVPHIEPPEYEFFWGSRANREITKMQIMEFLARVFKKDPQAWPSRYREALEQARALREANLAAQAPRSSVSED</sequence>
<evidence type="ECO:0000255" key="1">
    <source>
        <dbReference type="PROSITE-ProRule" id="PRU00127"/>
    </source>
</evidence>
<evidence type="ECO:0000256" key="2">
    <source>
        <dbReference type="SAM" id="MobiDB-lite"/>
    </source>
</evidence>
<evidence type="ECO:0000269" key="3">
    <source>
    </source>
</evidence>
<evidence type="ECO:0000269" key="4">
    <source>
    </source>
</evidence>
<evidence type="ECO:0000269" key="5">
    <source>
    </source>
</evidence>
<evidence type="ECO:0000269" key="6">
    <source>
    </source>
</evidence>
<gene>
    <name type="primary">Ndn</name>
</gene>
<name>NECD_MOUSE</name>
<dbReference type="EMBL" id="M80840">
    <property type="protein sequence ID" value="AAA39805.1"/>
    <property type="molecule type" value="mRNA"/>
</dbReference>
<dbReference type="EMBL" id="D76440">
    <property type="protein sequence ID" value="BAA11183.1"/>
    <property type="molecule type" value="Genomic_DNA"/>
</dbReference>
<dbReference type="EMBL" id="AK005078">
    <property type="protein sequence ID" value="BAB23802.1"/>
    <property type="molecule type" value="mRNA"/>
</dbReference>
<dbReference type="EMBL" id="AK075729">
    <property type="protein sequence ID" value="BAC35914.1"/>
    <property type="molecule type" value="mRNA"/>
</dbReference>
<dbReference type="EMBL" id="AK075735">
    <property type="protein sequence ID" value="BAC35917.1"/>
    <property type="molecule type" value="mRNA"/>
</dbReference>
<dbReference type="EMBL" id="AK076025">
    <property type="protein sequence ID" value="BAC36130.1"/>
    <property type="molecule type" value="mRNA"/>
</dbReference>
<dbReference type="EMBL" id="AK135444">
    <property type="protein sequence ID" value="BAE22535.1"/>
    <property type="molecule type" value="mRNA"/>
</dbReference>
<dbReference type="EMBL" id="AK149086">
    <property type="protein sequence ID" value="BAE28734.1"/>
    <property type="molecule type" value="mRNA"/>
</dbReference>
<dbReference type="EMBL" id="BC147249">
    <property type="protein sequence ID" value="AAI47250.1"/>
    <property type="molecule type" value="mRNA"/>
</dbReference>
<dbReference type="EMBL" id="BC147250">
    <property type="protein sequence ID" value="AAI47251.1"/>
    <property type="molecule type" value="mRNA"/>
</dbReference>
<dbReference type="CCDS" id="CCDS21326.1"/>
<dbReference type="PIR" id="JN0148">
    <property type="entry name" value="JN0148"/>
</dbReference>
<dbReference type="RefSeq" id="NP_035012.2">
    <property type="nucleotide sequence ID" value="NM_010882.3"/>
</dbReference>
<dbReference type="SMR" id="P25233"/>
<dbReference type="BioGRID" id="201712">
    <property type="interactions" value="85"/>
</dbReference>
<dbReference type="CORUM" id="P25233"/>
<dbReference type="FunCoup" id="P25233">
    <property type="interactions" value="346"/>
</dbReference>
<dbReference type="IntAct" id="P25233">
    <property type="interactions" value="9"/>
</dbReference>
<dbReference type="MINT" id="P25233"/>
<dbReference type="STRING" id="10090.ENSMUSP00000045369"/>
<dbReference type="MoonDB" id="P25233">
    <property type="type" value="Predicted"/>
</dbReference>
<dbReference type="iPTMnet" id="P25233"/>
<dbReference type="PhosphoSitePlus" id="P25233"/>
<dbReference type="PaxDb" id="10090-ENSMUSP00000045369"/>
<dbReference type="ProteomicsDB" id="287472"/>
<dbReference type="Pumba" id="P25233"/>
<dbReference type="Antibodypedia" id="22276">
    <property type="antibodies" value="367 antibodies from 26 providers"/>
</dbReference>
<dbReference type="DNASU" id="17984"/>
<dbReference type="Ensembl" id="ENSMUST00000038775.6">
    <property type="protein sequence ID" value="ENSMUSP00000045369.5"/>
    <property type="gene ID" value="ENSMUSG00000033585.6"/>
</dbReference>
<dbReference type="GeneID" id="17984"/>
<dbReference type="KEGG" id="mmu:17984"/>
<dbReference type="UCSC" id="uc009hff.1">
    <property type="organism name" value="mouse"/>
</dbReference>
<dbReference type="AGR" id="MGI:97290"/>
<dbReference type="CTD" id="4692"/>
<dbReference type="MGI" id="MGI:97290">
    <property type="gene designation" value="Ndn"/>
</dbReference>
<dbReference type="VEuPathDB" id="HostDB:ENSMUSG00000033585"/>
<dbReference type="eggNOG" id="KOG4562">
    <property type="taxonomic scope" value="Eukaryota"/>
</dbReference>
<dbReference type="GeneTree" id="ENSGT00940000163084"/>
<dbReference type="HOGENOM" id="CLU_039582_1_1_1"/>
<dbReference type="InParanoid" id="P25233"/>
<dbReference type="OMA" id="NPTAHCP"/>
<dbReference type="OrthoDB" id="205198at2759"/>
<dbReference type="PhylomeDB" id="P25233"/>
<dbReference type="TreeFam" id="TF328505"/>
<dbReference type="BioGRID-ORCS" id="17984">
    <property type="hits" value="0 hits in 77 CRISPR screens"/>
</dbReference>
<dbReference type="ChiTaRS" id="Ndn">
    <property type="organism name" value="mouse"/>
</dbReference>
<dbReference type="PRO" id="PR:P25233"/>
<dbReference type="Proteomes" id="UP000000589">
    <property type="component" value="Chromosome 7"/>
</dbReference>
<dbReference type="RNAct" id="P25233">
    <property type="molecule type" value="protein"/>
</dbReference>
<dbReference type="Bgee" id="ENSMUSG00000033585">
    <property type="expression patterns" value="Expressed in dorsomedial nucleus of hypothalamus and 285 other cell types or tissues"/>
</dbReference>
<dbReference type="GO" id="GO:0042995">
    <property type="term" value="C:cell projection"/>
    <property type="evidence" value="ECO:0000314"/>
    <property type="project" value="MGI"/>
</dbReference>
<dbReference type="GO" id="GO:0005813">
    <property type="term" value="C:centrosome"/>
    <property type="evidence" value="ECO:0000314"/>
    <property type="project" value="MGI"/>
</dbReference>
<dbReference type="GO" id="GO:0005737">
    <property type="term" value="C:cytoplasm"/>
    <property type="evidence" value="ECO:0000314"/>
    <property type="project" value="MGI"/>
</dbReference>
<dbReference type="GO" id="GO:0005829">
    <property type="term" value="C:cytosol"/>
    <property type="evidence" value="ECO:0000314"/>
    <property type="project" value="MGI"/>
</dbReference>
<dbReference type="GO" id="GO:0016363">
    <property type="term" value="C:nuclear matrix"/>
    <property type="evidence" value="ECO:0007669"/>
    <property type="project" value="UniProtKB-SubCell"/>
</dbReference>
<dbReference type="GO" id="GO:0005654">
    <property type="term" value="C:nucleoplasm"/>
    <property type="evidence" value="ECO:0007669"/>
    <property type="project" value="UniProtKB-SubCell"/>
</dbReference>
<dbReference type="GO" id="GO:0005634">
    <property type="term" value="C:nucleus"/>
    <property type="evidence" value="ECO:0000314"/>
    <property type="project" value="MGI"/>
</dbReference>
<dbReference type="GO" id="GO:0032991">
    <property type="term" value="C:protein-containing complex"/>
    <property type="evidence" value="ECO:0000314"/>
    <property type="project" value="MGI"/>
</dbReference>
<dbReference type="GO" id="GO:0003677">
    <property type="term" value="F:DNA binding"/>
    <property type="evidence" value="ECO:0007669"/>
    <property type="project" value="UniProtKB-KW"/>
</dbReference>
<dbReference type="GO" id="GO:0043015">
    <property type="term" value="F:gamma-tubulin binding"/>
    <property type="evidence" value="ECO:0000314"/>
    <property type="project" value="MGI"/>
</dbReference>
<dbReference type="GO" id="GO:1990841">
    <property type="term" value="F:promoter-specific chromatin binding"/>
    <property type="evidence" value="ECO:0000314"/>
    <property type="project" value="MGI"/>
</dbReference>
<dbReference type="GO" id="GO:0048675">
    <property type="term" value="P:axon extension"/>
    <property type="evidence" value="ECO:0000315"/>
    <property type="project" value="MGI"/>
</dbReference>
<dbReference type="GO" id="GO:0007413">
    <property type="term" value="P:axonal fasciculation"/>
    <property type="evidence" value="ECO:0000315"/>
    <property type="project" value="MGI"/>
</dbReference>
<dbReference type="GO" id="GO:0007409">
    <property type="term" value="P:axonogenesis"/>
    <property type="evidence" value="ECO:0000315"/>
    <property type="project" value="MGI"/>
</dbReference>
<dbReference type="GO" id="GO:0007417">
    <property type="term" value="P:central nervous system development"/>
    <property type="evidence" value="ECO:0000315"/>
    <property type="project" value="MGI"/>
</dbReference>
<dbReference type="GO" id="GO:0071514">
    <property type="term" value="P:genomic imprinting"/>
    <property type="evidence" value="ECO:0000315"/>
    <property type="project" value="MGI"/>
</dbReference>
<dbReference type="GO" id="GO:0008347">
    <property type="term" value="P:glial cell migration"/>
    <property type="evidence" value="ECO:0000315"/>
    <property type="project" value="MGI"/>
</dbReference>
<dbReference type="GO" id="GO:0048871">
    <property type="term" value="P:multicellular organismal-level homeostasis"/>
    <property type="evidence" value="ECO:0000315"/>
    <property type="project" value="MGI"/>
</dbReference>
<dbReference type="GO" id="GO:0000122">
    <property type="term" value="P:negative regulation of transcription by RNA polymerase II"/>
    <property type="evidence" value="ECO:0000315"/>
    <property type="project" value="MGI"/>
</dbReference>
<dbReference type="GO" id="GO:0048666">
    <property type="term" value="P:neuron development"/>
    <property type="evidence" value="ECO:0000315"/>
    <property type="project" value="MGI"/>
</dbReference>
<dbReference type="GO" id="GO:0030182">
    <property type="term" value="P:neuron differentiation"/>
    <property type="evidence" value="ECO:0000314"/>
    <property type="project" value="MGI"/>
</dbReference>
<dbReference type="GO" id="GO:0001764">
    <property type="term" value="P:neuron migration"/>
    <property type="evidence" value="ECO:0000315"/>
    <property type="project" value="MGI"/>
</dbReference>
<dbReference type="GO" id="GO:0048011">
    <property type="term" value="P:neurotrophin TRK receptor signaling pathway"/>
    <property type="evidence" value="ECO:0000315"/>
    <property type="project" value="MGI"/>
</dbReference>
<dbReference type="GO" id="GO:0045944">
    <property type="term" value="P:positive regulation of transcription by RNA polymerase II"/>
    <property type="evidence" value="ECO:0000314"/>
    <property type="project" value="MGI"/>
</dbReference>
<dbReference type="GO" id="GO:0009791">
    <property type="term" value="P:post-embryonic development"/>
    <property type="evidence" value="ECO:0000315"/>
    <property type="project" value="MGI"/>
</dbReference>
<dbReference type="GO" id="GO:0006355">
    <property type="term" value="P:regulation of DNA-templated transcription"/>
    <property type="evidence" value="ECO:0000316"/>
    <property type="project" value="MGI"/>
</dbReference>
<dbReference type="GO" id="GO:0007585">
    <property type="term" value="P:respiratory gaseous exchange by respiratory system"/>
    <property type="evidence" value="ECO:0000315"/>
    <property type="project" value="MGI"/>
</dbReference>
<dbReference type="GO" id="GO:0003016">
    <property type="term" value="P:respiratory system process"/>
    <property type="evidence" value="ECO:0000315"/>
    <property type="project" value="MGI"/>
</dbReference>
<dbReference type="GO" id="GO:0019233">
    <property type="term" value="P:sensory perception of pain"/>
    <property type="evidence" value="ECO:0000315"/>
    <property type="project" value="MGI"/>
</dbReference>
<dbReference type="FunFam" id="1.10.10.1210:FF:000001">
    <property type="entry name" value="melanoma-associated antigen D1"/>
    <property type="match status" value="1"/>
</dbReference>
<dbReference type="FunFam" id="1.10.10.1200:FF:000005">
    <property type="entry name" value="Necdin homolog (Mouse)"/>
    <property type="match status" value="1"/>
</dbReference>
<dbReference type="Gene3D" id="1.10.10.1200">
    <property type="entry name" value="MAGE homology domain, winged helix WH1 motif"/>
    <property type="match status" value="1"/>
</dbReference>
<dbReference type="Gene3D" id="1.10.10.1210">
    <property type="entry name" value="MAGE homology domain, winged helix WH2 motif"/>
    <property type="match status" value="1"/>
</dbReference>
<dbReference type="InterPro" id="IPR037445">
    <property type="entry name" value="MAGE"/>
</dbReference>
<dbReference type="InterPro" id="IPR041898">
    <property type="entry name" value="MAGE_WH1"/>
</dbReference>
<dbReference type="InterPro" id="IPR041899">
    <property type="entry name" value="MAGE_WH2"/>
</dbReference>
<dbReference type="InterPro" id="IPR002190">
    <property type="entry name" value="MHD_dom"/>
</dbReference>
<dbReference type="PANTHER" id="PTHR11736">
    <property type="entry name" value="MELANOMA-ASSOCIATED ANTIGEN MAGE ANTIGEN"/>
    <property type="match status" value="1"/>
</dbReference>
<dbReference type="PANTHER" id="PTHR11736:SF10">
    <property type="entry name" value="NECDIN"/>
    <property type="match status" value="1"/>
</dbReference>
<dbReference type="Pfam" id="PF01454">
    <property type="entry name" value="MAGE"/>
    <property type="match status" value="1"/>
</dbReference>
<dbReference type="SMART" id="SM01373">
    <property type="entry name" value="MAGE"/>
    <property type="match status" value="1"/>
</dbReference>
<dbReference type="PROSITE" id="PS50838">
    <property type="entry name" value="MAGE"/>
    <property type="match status" value="1"/>
</dbReference>
<keyword id="KW-0963">Cytoplasm</keyword>
<keyword id="KW-0238">DNA-binding</keyword>
<keyword id="KW-0341">Growth regulation</keyword>
<keyword id="KW-0539">Nucleus</keyword>
<keyword id="KW-1185">Reference proteome</keyword>
<keyword id="KW-0804">Transcription</keyword>
<keyword id="KW-0805">Transcription regulation</keyword>
<organism>
    <name type="scientific">Mus musculus</name>
    <name type="common">Mouse</name>
    <dbReference type="NCBI Taxonomy" id="10090"/>
    <lineage>
        <taxon>Eukaryota</taxon>
        <taxon>Metazoa</taxon>
        <taxon>Chordata</taxon>
        <taxon>Craniata</taxon>
        <taxon>Vertebrata</taxon>
        <taxon>Euteleostomi</taxon>
        <taxon>Mammalia</taxon>
        <taxon>Eutheria</taxon>
        <taxon>Euarchontoglires</taxon>
        <taxon>Glires</taxon>
        <taxon>Rodentia</taxon>
        <taxon>Myomorpha</taxon>
        <taxon>Muroidea</taxon>
        <taxon>Muridae</taxon>
        <taxon>Murinae</taxon>
        <taxon>Mus</taxon>
        <taxon>Mus</taxon>
    </lineage>
</organism>
<accession>P25233</accession>
<accession>B9EJJ5</accession>
<accession>Q542W7</accession>
<accession>Q61951</accession>